<sequence length="166" mass="19335">MSRYGKNLVHYIIVEHDDQRGQKPIDDDDEKNFYYHCSFTFETFFRATAFLLAPAVCAVREVPCRLTRTRYNATEYIEGYGWMISLQQGLGVAEFYRPWPLSVQLQRYTTPSRRSRFAVLTPQRKCHQNEANGQDLSLLILLSRIYPLCSNTSQTRRVAARKGKLS</sequence>
<gene>
    <name type="primary">UTR5</name>
    <name type="ordered locus">YEL035C</name>
    <name type="ORF">SYGP-ORF27</name>
</gene>
<proteinExistence type="evidence at transcript level"/>
<protein>
    <recommendedName>
        <fullName>Protein UTR5</fullName>
    </recommendedName>
    <alternativeName>
        <fullName>Unknown transcript 5 protein</fullName>
    </alternativeName>
</protein>
<keyword id="KW-1185">Reference proteome</keyword>
<feature type="chain" id="PRO_0000065747" description="Protein UTR5">
    <location>
        <begin position="1"/>
        <end position="166"/>
    </location>
</feature>
<feature type="sequence conflict" description="In Ref. 1." evidence="1" ref="1">
    <original>MSRYGKNLVHYIIVEHDDQR</original>
    <variation>MRDSNVKISVFPCALYNRGNTTIN</variation>
    <location>
        <begin position="1"/>
        <end position="20"/>
    </location>
</feature>
<reference key="1">
    <citation type="journal article" date="1993" name="J. Mol. Biol.">
        <title>The gene clusters ARC and COR on chromosomes 5 and 10, respectively, of Saccharomyces cerevisiae share a common ancestry.</title>
        <authorList>
            <person name="Melnick L."/>
            <person name="Sherman F."/>
        </authorList>
    </citation>
    <scope>NUCLEOTIDE SEQUENCE</scope>
    <source>
        <strain>B-6441</strain>
    </source>
</reference>
<reference key="2">
    <citation type="journal article" date="1997" name="Nature">
        <title>The nucleotide sequence of Saccharomyces cerevisiae chromosome V.</title>
        <authorList>
            <person name="Dietrich F.S."/>
            <person name="Mulligan J.T."/>
            <person name="Hennessy K.M."/>
            <person name="Yelton M.A."/>
            <person name="Allen E."/>
            <person name="Araujo R."/>
            <person name="Aviles E."/>
            <person name="Berno A."/>
            <person name="Brennan T."/>
            <person name="Carpenter J."/>
            <person name="Chen E."/>
            <person name="Cherry J.M."/>
            <person name="Chung E."/>
            <person name="Duncan M."/>
            <person name="Guzman E."/>
            <person name="Hartzell G."/>
            <person name="Hunicke-Smith S."/>
            <person name="Hyman R.W."/>
            <person name="Kayser A."/>
            <person name="Komp C."/>
            <person name="Lashkari D."/>
            <person name="Lew H."/>
            <person name="Lin D."/>
            <person name="Mosedale D."/>
            <person name="Nakahara K."/>
            <person name="Namath A."/>
            <person name="Norgren R."/>
            <person name="Oefner P."/>
            <person name="Oh C."/>
            <person name="Petel F.X."/>
            <person name="Roberts D."/>
            <person name="Sehl P."/>
            <person name="Schramm S."/>
            <person name="Shogren T."/>
            <person name="Smith V."/>
            <person name="Taylor P."/>
            <person name="Wei Y."/>
            <person name="Botstein D."/>
            <person name="Davis R.W."/>
        </authorList>
    </citation>
    <scope>NUCLEOTIDE SEQUENCE [LARGE SCALE GENOMIC DNA]</scope>
    <source>
        <strain>ATCC 204508 / S288c</strain>
    </source>
</reference>
<reference key="3">
    <citation type="journal article" date="2014" name="G3 (Bethesda)">
        <title>The reference genome sequence of Saccharomyces cerevisiae: Then and now.</title>
        <authorList>
            <person name="Engel S.R."/>
            <person name="Dietrich F.S."/>
            <person name="Fisk D.G."/>
            <person name="Binkley G."/>
            <person name="Balakrishnan R."/>
            <person name="Costanzo M.C."/>
            <person name="Dwight S.S."/>
            <person name="Hitz B.C."/>
            <person name="Karra K."/>
            <person name="Nash R.S."/>
            <person name="Weng S."/>
            <person name="Wong E.D."/>
            <person name="Lloyd P."/>
            <person name="Skrzypek M.S."/>
            <person name="Miyasato S.R."/>
            <person name="Simison M."/>
            <person name="Cherry J.M."/>
        </authorList>
    </citation>
    <scope>GENOME REANNOTATION</scope>
    <source>
        <strain>ATCC 204508 / S288c</strain>
    </source>
</reference>
<reference key="4">
    <citation type="journal article" date="2007" name="Genome Res.">
        <title>Approaching a complete repository of sequence-verified protein-encoding clones for Saccharomyces cerevisiae.</title>
        <authorList>
            <person name="Hu Y."/>
            <person name="Rolfs A."/>
            <person name="Bhullar B."/>
            <person name="Murthy T.V.S."/>
            <person name="Zhu C."/>
            <person name="Berger M.F."/>
            <person name="Camargo A.A."/>
            <person name="Kelley F."/>
            <person name="McCarron S."/>
            <person name="Jepson D."/>
            <person name="Richardson A."/>
            <person name="Raphael J."/>
            <person name="Moreira D."/>
            <person name="Taycher E."/>
            <person name="Zuo D."/>
            <person name="Mohr S."/>
            <person name="Kane M.F."/>
            <person name="Williamson J."/>
            <person name="Simpson A.J.G."/>
            <person name="Bulyk M.L."/>
            <person name="Harlow E."/>
            <person name="Marsischky G."/>
            <person name="Kolodner R.D."/>
            <person name="LaBaer J."/>
        </authorList>
    </citation>
    <scope>NUCLEOTIDE SEQUENCE [GENOMIC DNA]</scope>
    <source>
        <strain>ATCC 204508 / S288c</strain>
    </source>
</reference>
<organism>
    <name type="scientific">Saccharomyces cerevisiae (strain ATCC 204508 / S288c)</name>
    <name type="common">Baker's yeast</name>
    <dbReference type="NCBI Taxonomy" id="559292"/>
    <lineage>
        <taxon>Eukaryota</taxon>
        <taxon>Fungi</taxon>
        <taxon>Dikarya</taxon>
        <taxon>Ascomycota</taxon>
        <taxon>Saccharomycotina</taxon>
        <taxon>Saccharomycetes</taxon>
        <taxon>Saccharomycetales</taxon>
        <taxon>Saccharomycetaceae</taxon>
        <taxon>Saccharomyces</taxon>
    </lineage>
</organism>
<name>UTR5_YEAST</name>
<dbReference type="EMBL" id="L22173">
    <property type="protein sequence ID" value="AAA34936.1"/>
    <property type="molecule type" value="Genomic_DNA"/>
</dbReference>
<dbReference type="EMBL" id="S65964">
    <property type="protein sequence ID" value="AAD13970.1"/>
    <property type="molecule type" value="Genomic_DNA"/>
</dbReference>
<dbReference type="EMBL" id="S66120">
    <property type="protein sequence ID" value="AAB28442.1"/>
    <property type="molecule type" value="mRNA"/>
</dbReference>
<dbReference type="EMBL" id="U18779">
    <property type="protein sequence ID" value="AAB65007.1"/>
    <property type="molecule type" value="Genomic_DNA"/>
</dbReference>
<dbReference type="EMBL" id="AY558444">
    <property type="protein sequence ID" value="AAS56770.1"/>
    <property type="molecule type" value="Genomic_DNA"/>
</dbReference>
<dbReference type="EMBL" id="BK006939">
    <property type="protein sequence ID" value="DAA07618.1"/>
    <property type="molecule type" value="Genomic_DNA"/>
</dbReference>
<dbReference type="PIR" id="S50509">
    <property type="entry name" value="S50509"/>
</dbReference>
<dbReference type="RefSeq" id="NP_010879.1">
    <property type="nucleotide sequence ID" value="NM_001178850.1"/>
</dbReference>
<dbReference type="BioGRID" id="36694">
    <property type="interactions" value="76"/>
</dbReference>
<dbReference type="FunCoup" id="P32630">
    <property type="interactions" value="63"/>
</dbReference>
<dbReference type="IntAct" id="P32630">
    <property type="interactions" value="1"/>
</dbReference>
<dbReference type="STRING" id="4932.YEL035C"/>
<dbReference type="PaxDb" id="4932-YEL035C"/>
<dbReference type="EnsemblFungi" id="YEL035C_mRNA">
    <property type="protein sequence ID" value="YEL035C"/>
    <property type="gene ID" value="YEL035C"/>
</dbReference>
<dbReference type="GeneID" id="856676"/>
<dbReference type="KEGG" id="sce:YEL035C"/>
<dbReference type="AGR" id="SGD:S000000761"/>
<dbReference type="SGD" id="S000000761">
    <property type="gene designation" value="UTR5"/>
</dbReference>
<dbReference type="VEuPathDB" id="FungiDB:YEL035C"/>
<dbReference type="HOGENOM" id="CLU_1628342_0_0_1"/>
<dbReference type="InParanoid" id="P32630"/>
<dbReference type="OMA" id="CHQNEAN"/>
<dbReference type="OrthoDB" id="10282779at2759"/>
<dbReference type="BioCyc" id="YEAST:G3O-30157-MONOMER"/>
<dbReference type="BioGRID-ORCS" id="856676">
    <property type="hits" value="9 hits in 10 CRISPR screens"/>
</dbReference>
<dbReference type="PRO" id="PR:P32630"/>
<dbReference type="Proteomes" id="UP000002311">
    <property type="component" value="Chromosome V"/>
</dbReference>
<dbReference type="RNAct" id="P32630">
    <property type="molecule type" value="protein"/>
</dbReference>
<evidence type="ECO:0000305" key="1"/>
<accession>P32630</accession>
<accession>D3DLL4</accession>